<proteinExistence type="inferred from homology"/>
<evidence type="ECO:0000255" key="1">
    <source>
        <dbReference type="HAMAP-Rule" id="MF_00388"/>
    </source>
</evidence>
<organism>
    <name type="scientific">Escherichia coli (strain 55989 / EAEC)</name>
    <dbReference type="NCBI Taxonomy" id="585055"/>
    <lineage>
        <taxon>Bacteria</taxon>
        <taxon>Pseudomonadati</taxon>
        <taxon>Pseudomonadota</taxon>
        <taxon>Gammaproteobacteria</taxon>
        <taxon>Enterobacterales</taxon>
        <taxon>Enterobacteriaceae</taxon>
        <taxon>Escherichia</taxon>
    </lineage>
</organism>
<dbReference type="EC" id="3.5.1.108" evidence="1"/>
<dbReference type="EMBL" id="CU928145">
    <property type="protein sequence ID" value="CAU95980.1"/>
    <property type="molecule type" value="Genomic_DNA"/>
</dbReference>
<dbReference type="RefSeq" id="WP_000595482.1">
    <property type="nucleotide sequence ID" value="NZ_CP028304.1"/>
</dbReference>
<dbReference type="SMR" id="B7LFW6"/>
<dbReference type="GeneID" id="93777338"/>
<dbReference type="KEGG" id="eck:EC55989_0092"/>
<dbReference type="HOGENOM" id="CLU_046528_1_0_6"/>
<dbReference type="UniPathway" id="UPA00359">
    <property type="reaction ID" value="UER00478"/>
</dbReference>
<dbReference type="Proteomes" id="UP000000746">
    <property type="component" value="Chromosome"/>
</dbReference>
<dbReference type="GO" id="GO:0016020">
    <property type="term" value="C:membrane"/>
    <property type="evidence" value="ECO:0007669"/>
    <property type="project" value="GOC"/>
</dbReference>
<dbReference type="GO" id="GO:0046872">
    <property type="term" value="F:metal ion binding"/>
    <property type="evidence" value="ECO:0007669"/>
    <property type="project" value="UniProtKB-KW"/>
</dbReference>
<dbReference type="GO" id="GO:0103117">
    <property type="term" value="F:UDP-3-O-acyl-N-acetylglucosamine deacetylase activity"/>
    <property type="evidence" value="ECO:0007669"/>
    <property type="project" value="UniProtKB-UniRule"/>
</dbReference>
<dbReference type="GO" id="GO:0009245">
    <property type="term" value="P:lipid A biosynthetic process"/>
    <property type="evidence" value="ECO:0007669"/>
    <property type="project" value="UniProtKB-UniRule"/>
</dbReference>
<dbReference type="FunFam" id="3.30.1700.10:FF:000001">
    <property type="entry name" value="UDP-3-O-acyl-N-acetylglucosamine deacetylase"/>
    <property type="match status" value="1"/>
</dbReference>
<dbReference type="FunFam" id="3.30.230.20:FF:000001">
    <property type="entry name" value="UDP-3-O-acyl-N-acetylglucosamine deacetylase"/>
    <property type="match status" value="1"/>
</dbReference>
<dbReference type="Gene3D" id="3.30.230.20">
    <property type="entry name" value="lpxc deacetylase, domain 1"/>
    <property type="match status" value="1"/>
</dbReference>
<dbReference type="Gene3D" id="3.30.1700.10">
    <property type="entry name" value="lpxc deacetylase, domain 2"/>
    <property type="match status" value="1"/>
</dbReference>
<dbReference type="HAMAP" id="MF_00388">
    <property type="entry name" value="LpxC"/>
    <property type="match status" value="1"/>
</dbReference>
<dbReference type="InterPro" id="IPR020568">
    <property type="entry name" value="Ribosomal_Su5_D2-typ_SF"/>
</dbReference>
<dbReference type="InterPro" id="IPR004463">
    <property type="entry name" value="UDP-acyl_GlcNac_deAcase"/>
</dbReference>
<dbReference type="InterPro" id="IPR011334">
    <property type="entry name" value="UDP-acyl_GlcNac_deAcase_C"/>
</dbReference>
<dbReference type="InterPro" id="IPR015870">
    <property type="entry name" value="UDP-acyl_N-AcGlcN_deAcase_N"/>
</dbReference>
<dbReference type="NCBIfam" id="TIGR00325">
    <property type="entry name" value="lpxC"/>
    <property type="match status" value="1"/>
</dbReference>
<dbReference type="PANTHER" id="PTHR33694">
    <property type="entry name" value="UDP-3-O-ACYL-N-ACETYLGLUCOSAMINE DEACETYLASE 1, MITOCHONDRIAL-RELATED"/>
    <property type="match status" value="1"/>
</dbReference>
<dbReference type="PANTHER" id="PTHR33694:SF1">
    <property type="entry name" value="UDP-3-O-ACYL-N-ACETYLGLUCOSAMINE DEACETYLASE 1, MITOCHONDRIAL-RELATED"/>
    <property type="match status" value="1"/>
</dbReference>
<dbReference type="Pfam" id="PF03331">
    <property type="entry name" value="LpxC"/>
    <property type="match status" value="1"/>
</dbReference>
<dbReference type="SUPFAM" id="SSF54211">
    <property type="entry name" value="Ribosomal protein S5 domain 2-like"/>
    <property type="match status" value="2"/>
</dbReference>
<feature type="chain" id="PRO_1000134396" description="UDP-3-O-acyl-N-acetylglucosamine deacetylase">
    <location>
        <begin position="1"/>
        <end position="305"/>
    </location>
</feature>
<feature type="active site" description="Proton donor" evidence="1">
    <location>
        <position position="265"/>
    </location>
</feature>
<feature type="binding site" evidence="1">
    <location>
        <position position="79"/>
    </location>
    <ligand>
        <name>Zn(2+)</name>
        <dbReference type="ChEBI" id="CHEBI:29105"/>
    </ligand>
</feature>
<feature type="binding site" evidence="1">
    <location>
        <position position="238"/>
    </location>
    <ligand>
        <name>Zn(2+)</name>
        <dbReference type="ChEBI" id="CHEBI:29105"/>
    </ligand>
</feature>
<feature type="binding site" evidence="1">
    <location>
        <position position="242"/>
    </location>
    <ligand>
        <name>Zn(2+)</name>
        <dbReference type="ChEBI" id="CHEBI:29105"/>
    </ligand>
</feature>
<accession>B7LFW6</accession>
<comment type="function">
    <text evidence="1">Catalyzes the hydrolysis of UDP-3-O-myristoyl-N-acetylglucosamine to form UDP-3-O-myristoylglucosamine and acetate, the committed step in lipid A biosynthesis.</text>
</comment>
<comment type="catalytic activity">
    <reaction evidence="1">
        <text>a UDP-3-O-[(3R)-3-hydroxyacyl]-N-acetyl-alpha-D-glucosamine + H2O = a UDP-3-O-[(3R)-3-hydroxyacyl]-alpha-D-glucosamine + acetate</text>
        <dbReference type="Rhea" id="RHEA:67816"/>
        <dbReference type="ChEBI" id="CHEBI:15377"/>
        <dbReference type="ChEBI" id="CHEBI:30089"/>
        <dbReference type="ChEBI" id="CHEBI:137740"/>
        <dbReference type="ChEBI" id="CHEBI:173225"/>
        <dbReference type="EC" id="3.5.1.108"/>
    </reaction>
</comment>
<comment type="cofactor">
    <cofactor evidence="1">
        <name>Zn(2+)</name>
        <dbReference type="ChEBI" id="CHEBI:29105"/>
    </cofactor>
</comment>
<comment type="pathway">
    <text evidence="1">Glycolipid biosynthesis; lipid IV(A) biosynthesis; lipid IV(A) from (3R)-3-hydroxytetradecanoyl-[acyl-carrier-protein] and UDP-N-acetyl-alpha-D-glucosamine: step 2/6.</text>
</comment>
<comment type="similarity">
    <text evidence="1">Belongs to the LpxC family.</text>
</comment>
<gene>
    <name evidence="1" type="primary">lpxC</name>
    <name type="ordered locus">EC55989_0092</name>
</gene>
<name>LPXC_ECO55</name>
<reference key="1">
    <citation type="journal article" date="2009" name="PLoS Genet.">
        <title>Organised genome dynamics in the Escherichia coli species results in highly diverse adaptive paths.</title>
        <authorList>
            <person name="Touchon M."/>
            <person name="Hoede C."/>
            <person name="Tenaillon O."/>
            <person name="Barbe V."/>
            <person name="Baeriswyl S."/>
            <person name="Bidet P."/>
            <person name="Bingen E."/>
            <person name="Bonacorsi S."/>
            <person name="Bouchier C."/>
            <person name="Bouvet O."/>
            <person name="Calteau A."/>
            <person name="Chiapello H."/>
            <person name="Clermont O."/>
            <person name="Cruveiller S."/>
            <person name="Danchin A."/>
            <person name="Diard M."/>
            <person name="Dossat C."/>
            <person name="Karoui M.E."/>
            <person name="Frapy E."/>
            <person name="Garry L."/>
            <person name="Ghigo J.M."/>
            <person name="Gilles A.M."/>
            <person name="Johnson J."/>
            <person name="Le Bouguenec C."/>
            <person name="Lescat M."/>
            <person name="Mangenot S."/>
            <person name="Martinez-Jehanne V."/>
            <person name="Matic I."/>
            <person name="Nassif X."/>
            <person name="Oztas S."/>
            <person name="Petit M.A."/>
            <person name="Pichon C."/>
            <person name="Rouy Z."/>
            <person name="Ruf C.S."/>
            <person name="Schneider D."/>
            <person name="Tourret J."/>
            <person name="Vacherie B."/>
            <person name="Vallenet D."/>
            <person name="Medigue C."/>
            <person name="Rocha E.P.C."/>
            <person name="Denamur E."/>
        </authorList>
    </citation>
    <scope>NUCLEOTIDE SEQUENCE [LARGE SCALE GENOMIC DNA]</scope>
    <source>
        <strain>55989 / EAEC</strain>
    </source>
</reference>
<protein>
    <recommendedName>
        <fullName evidence="1">UDP-3-O-acyl-N-acetylglucosamine deacetylase</fullName>
        <shortName evidence="1">UDP-3-O-acyl-GlcNAc deacetylase</shortName>
        <ecNumber evidence="1">3.5.1.108</ecNumber>
    </recommendedName>
    <alternativeName>
        <fullName evidence="1">UDP-3-O-[R-3-hydroxymyristoyl]-N-acetylglucosamine deacetylase</fullName>
    </alternativeName>
</protein>
<sequence length="305" mass="33956">MIKQRTLKRIVQATGVGLHTGKKVTLTLRPAPANTGVIYRRTDLNPPVDFPADAKSVRDTMLCTCLVNEHDVRISTVEHLNAALAGLGIDNIVIEVNAPEIPIMDGSAAPFVYLLLDAGIDELNCAKKFVRIKETVRVEDGDKWAEFKPYNGFSLDFTIDFNHPAIDSSNQRYAMNFSADAFMRQISRARTFGFMRDIEYLQSRGLCLGGSFDCAIVVDDYRVLNEDGLRFEDEFVRHKMLDAIGDLFMCGHNIIGAFTAYKSGHALNNKLLQAVLAKQEAWEYVTFQDDAELPLAFKAPSAVLA</sequence>
<keyword id="KW-0378">Hydrolase</keyword>
<keyword id="KW-0441">Lipid A biosynthesis</keyword>
<keyword id="KW-0444">Lipid biosynthesis</keyword>
<keyword id="KW-0443">Lipid metabolism</keyword>
<keyword id="KW-0479">Metal-binding</keyword>
<keyword id="KW-1185">Reference proteome</keyword>
<keyword id="KW-0862">Zinc</keyword>